<evidence type="ECO:0000255" key="1">
    <source>
        <dbReference type="HAMAP-Rule" id="MF_00590"/>
    </source>
</evidence>
<sequence>MEVVKDIAESYGAERIYTVGDVVTQNFFKHGLIPTSAAVDEKTRRGVRIEQLAVFKRVIKVNNPPGYITEEAWSAVEEAVRGGVIIKVEGEEDMLSLAFIKLAPPKSIVAYGHYLGALIALPVDWYKEYVLKLFDYLEKC</sequence>
<gene>
    <name type="ordered locus">PAE3284</name>
</gene>
<comment type="function">
    <text evidence="1">Catalyzes the GTP-dependent phosphorylation of the 3'-hydroxyl group of dephosphocoenzyme A to form coenzyme A (CoA).</text>
</comment>
<comment type="catalytic activity">
    <reaction evidence="1">
        <text>3'-dephospho-CoA + GTP = GDP + CoA + H(+)</text>
        <dbReference type="Rhea" id="RHEA:61156"/>
        <dbReference type="ChEBI" id="CHEBI:15378"/>
        <dbReference type="ChEBI" id="CHEBI:37565"/>
        <dbReference type="ChEBI" id="CHEBI:57287"/>
        <dbReference type="ChEBI" id="CHEBI:57328"/>
        <dbReference type="ChEBI" id="CHEBI:58189"/>
        <dbReference type="EC" id="2.7.1.237"/>
    </reaction>
</comment>
<comment type="pathway">
    <text evidence="1">Cofactor biosynthesis; coenzyme A biosynthesis.</text>
</comment>
<comment type="similarity">
    <text evidence="1">Belongs to the GTP-dependent DPCK family.</text>
</comment>
<dbReference type="EC" id="2.7.1.237" evidence="1"/>
<dbReference type="EMBL" id="AE009441">
    <property type="protein sequence ID" value="AAL64810.1"/>
    <property type="molecule type" value="Genomic_DNA"/>
</dbReference>
<dbReference type="SMR" id="Q8ZTF1"/>
<dbReference type="FunCoup" id="Q8ZTF1">
    <property type="interactions" value="7"/>
</dbReference>
<dbReference type="STRING" id="178306.PAE3284"/>
<dbReference type="EnsemblBacteria" id="AAL64810">
    <property type="protein sequence ID" value="AAL64810"/>
    <property type="gene ID" value="PAE3284"/>
</dbReference>
<dbReference type="KEGG" id="pai:PAE3284"/>
<dbReference type="PATRIC" id="fig|178306.9.peg.2472"/>
<dbReference type="eggNOG" id="arCOG04076">
    <property type="taxonomic scope" value="Archaea"/>
</dbReference>
<dbReference type="HOGENOM" id="CLU_120795_1_0_2"/>
<dbReference type="InParanoid" id="Q8ZTF1"/>
<dbReference type="UniPathway" id="UPA00241"/>
<dbReference type="Proteomes" id="UP000002439">
    <property type="component" value="Chromosome"/>
</dbReference>
<dbReference type="GO" id="GO:0005525">
    <property type="term" value="F:GTP binding"/>
    <property type="evidence" value="ECO:0007669"/>
    <property type="project" value="UniProtKB-UniRule"/>
</dbReference>
<dbReference type="GO" id="GO:0016301">
    <property type="term" value="F:kinase activity"/>
    <property type="evidence" value="ECO:0007669"/>
    <property type="project" value="UniProtKB-UniRule"/>
</dbReference>
<dbReference type="GO" id="GO:0015937">
    <property type="term" value="P:coenzyme A biosynthetic process"/>
    <property type="evidence" value="ECO:0007669"/>
    <property type="project" value="UniProtKB-UniRule"/>
</dbReference>
<dbReference type="HAMAP" id="MF_00590">
    <property type="entry name" value="Dephospho_CoA_kinase_GTP_dep"/>
    <property type="match status" value="1"/>
</dbReference>
<dbReference type="InterPro" id="IPR007164">
    <property type="entry name" value="GTP-dep_dephospho-CoA_kin"/>
</dbReference>
<dbReference type="PANTHER" id="PTHR40732:SF1">
    <property type="entry name" value="GTP-DEPENDENT DEPHOSPHO-COA KINASE"/>
    <property type="match status" value="1"/>
</dbReference>
<dbReference type="PANTHER" id="PTHR40732">
    <property type="entry name" value="UPF0218 PROTEIN TK1697"/>
    <property type="match status" value="1"/>
</dbReference>
<dbReference type="Pfam" id="PF04019">
    <property type="entry name" value="DUF359"/>
    <property type="match status" value="1"/>
</dbReference>
<dbReference type="PIRSF" id="PIRSF006533">
    <property type="entry name" value="UCP006533"/>
    <property type="match status" value="1"/>
</dbReference>
<proteinExistence type="inferred from homology"/>
<feature type="chain" id="PRO_0000137614" description="GTP-dependent dephospho-CoA kinase">
    <location>
        <begin position="1"/>
        <end position="140"/>
    </location>
</feature>
<feature type="binding site" evidence="1">
    <location>
        <position position="21"/>
    </location>
    <ligand>
        <name>GTP</name>
        <dbReference type="ChEBI" id="CHEBI:37565"/>
    </ligand>
</feature>
<feature type="binding site" evidence="1">
    <location>
        <position position="22"/>
    </location>
    <ligand>
        <name>GTP</name>
        <dbReference type="ChEBI" id="CHEBI:37565"/>
    </ligand>
</feature>
<feature type="binding site" evidence="1">
    <location>
        <position position="23"/>
    </location>
    <ligand>
        <name>GTP</name>
        <dbReference type="ChEBI" id="CHEBI:37565"/>
    </ligand>
</feature>
<feature type="binding site" evidence="1">
    <location>
        <position position="40"/>
    </location>
    <ligand>
        <name>GTP</name>
        <dbReference type="ChEBI" id="CHEBI:37565"/>
    </ligand>
</feature>
<feature type="binding site" evidence="1">
    <location>
        <position position="42"/>
    </location>
    <ligand>
        <name>GTP</name>
        <dbReference type="ChEBI" id="CHEBI:37565"/>
    </ligand>
</feature>
<feature type="binding site" evidence="1">
    <location>
        <position position="92"/>
    </location>
    <ligand>
        <name>GTP</name>
        <dbReference type="ChEBI" id="CHEBI:37565"/>
    </ligand>
</feature>
<name>DPCKG_PYRAE</name>
<accession>Q8ZTF1</accession>
<reference key="1">
    <citation type="journal article" date="2002" name="Proc. Natl. Acad. Sci. U.S.A.">
        <title>Genome sequence of the hyperthermophilic crenarchaeon Pyrobaculum aerophilum.</title>
        <authorList>
            <person name="Fitz-Gibbon S.T."/>
            <person name="Ladner H."/>
            <person name="Kim U.-J."/>
            <person name="Stetter K.O."/>
            <person name="Simon M.I."/>
            <person name="Miller J.H."/>
        </authorList>
    </citation>
    <scope>NUCLEOTIDE SEQUENCE [LARGE SCALE GENOMIC DNA]</scope>
    <source>
        <strain>ATCC 51768 / DSM 7523 / JCM 9630 / CIP 104966 / NBRC 100827 / IM2</strain>
    </source>
</reference>
<protein>
    <recommendedName>
        <fullName evidence="1">GTP-dependent dephospho-CoA kinase</fullName>
        <ecNumber evidence="1">2.7.1.237</ecNumber>
    </recommendedName>
    <alternativeName>
        <fullName evidence="1">Dephospho-coenzyme A kinase</fullName>
        <shortName evidence="1">DPCK</shortName>
    </alternativeName>
</protein>
<keyword id="KW-0173">Coenzyme A biosynthesis</keyword>
<keyword id="KW-0342">GTP-binding</keyword>
<keyword id="KW-0418">Kinase</keyword>
<keyword id="KW-0547">Nucleotide-binding</keyword>
<keyword id="KW-1185">Reference proteome</keyword>
<keyword id="KW-0808">Transferase</keyword>
<organism>
    <name type="scientific">Pyrobaculum aerophilum (strain ATCC 51768 / DSM 7523 / JCM 9630 / CIP 104966 / NBRC 100827 / IM2)</name>
    <dbReference type="NCBI Taxonomy" id="178306"/>
    <lineage>
        <taxon>Archaea</taxon>
        <taxon>Thermoproteota</taxon>
        <taxon>Thermoprotei</taxon>
        <taxon>Thermoproteales</taxon>
        <taxon>Thermoproteaceae</taxon>
        <taxon>Pyrobaculum</taxon>
    </lineage>
</organism>